<comment type="function">
    <text evidence="1">Blocks contraction of smooth muscle elicited by high potassium-induced depolarization, but does not block caffeine-stimulated contraction. May target voltage-gated calcium channels on smooth muscle (By similarity).</text>
</comment>
<comment type="subcellular location">
    <subcellularLocation>
        <location evidence="1">Secreted</location>
    </subcellularLocation>
</comment>
<comment type="tissue specificity">
    <text>Expressed by the venom gland.</text>
</comment>
<comment type="similarity">
    <text evidence="3">Belongs to the CRISP family.</text>
</comment>
<keyword id="KW-0108">Calcium channel impairing toxin</keyword>
<keyword id="KW-1015">Disulfide bond</keyword>
<keyword id="KW-0872">Ion channel impairing toxin</keyword>
<keyword id="KW-0528">Neurotoxin</keyword>
<keyword id="KW-0964">Secreted</keyword>
<keyword id="KW-0732">Signal</keyword>
<keyword id="KW-0800">Toxin</keyword>
<protein>
    <recommendedName>
        <fullName>Cysteine-rich venom protein ENH1</fullName>
        <shortName>CRVP</shortName>
    </recommendedName>
    <alternativeName>
        <fullName>Cysteine-rich secretory protein ENH1</fullName>
        <shortName>CRISP-ENH1</shortName>
    </alternativeName>
</protein>
<name>CRVP1_PSEPL</name>
<accession>Q2XXQ3</accession>
<organism>
    <name type="scientific">Pseudoferania polylepis</name>
    <name type="common">Macleay's water snake</name>
    <name type="synonym">Enhydris polylepis</name>
    <dbReference type="NCBI Taxonomy" id="338839"/>
    <lineage>
        <taxon>Eukaryota</taxon>
        <taxon>Metazoa</taxon>
        <taxon>Chordata</taxon>
        <taxon>Craniata</taxon>
        <taxon>Vertebrata</taxon>
        <taxon>Euteleostomi</taxon>
        <taxon>Lepidosauria</taxon>
        <taxon>Squamata</taxon>
        <taxon>Bifurcata</taxon>
        <taxon>Unidentata</taxon>
        <taxon>Episquamata</taxon>
        <taxon>Toxicofera</taxon>
        <taxon>Serpentes</taxon>
        <taxon>Colubroidea</taxon>
        <taxon>Homalopsidae</taxon>
        <taxon>Pseudoferania</taxon>
    </lineage>
</organism>
<reference key="1">
    <citation type="journal article" date="2006" name="Nature">
        <title>Early evolution of the venom system in lizards and snakes.</title>
        <authorList>
            <person name="Fry B.G."/>
            <person name="Vidal N."/>
            <person name="Norman J.A."/>
            <person name="Vonk F.J."/>
            <person name="Scheib H."/>
            <person name="Ramjan S.F.R."/>
            <person name="Kuruppu S."/>
            <person name="Fung K."/>
            <person name="Blair Hedges S."/>
            <person name="Richardson M.K."/>
            <person name="Hodgson W.C."/>
            <person name="Ignjatovic V."/>
            <person name="Summerhayes R."/>
            <person name="Kochva E."/>
        </authorList>
    </citation>
    <scope>NUCLEOTIDE SEQUENCE [LARGE SCALE MRNA]</scope>
    <source>
        <tissue>Venom gland</tissue>
    </source>
</reference>
<sequence>MIVFILLSLAAVLQQFVADVNFESESPRRTEKQTEIVDMHNSFRRSVNPTARNMLKMEWYPEAADNAERWAYQCIYDHSANSERVIGGIQCGENIYKSSNPRAWTEIIQSWYDEIQNFEYGVGANPPGSVIGHYTQIVWYKSYRIGCAAAYCPSYPYNYFYVCQYCPTGNMEGLTATPYTSGPTCADCPSHCDDGLCTNPCPITNTFTNCDSLLQQNSCEDSYIKTNCGASCFCQDKII</sequence>
<dbReference type="EMBL" id="DQ139892">
    <property type="protein sequence ID" value="AAZ75598.1"/>
    <property type="molecule type" value="mRNA"/>
</dbReference>
<dbReference type="SMR" id="Q2XXQ3"/>
<dbReference type="GO" id="GO:0005576">
    <property type="term" value="C:extracellular region"/>
    <property type="evidence" value="ECO:0007669"/>
    <property type="project" value="UniProtKB-SubCell"/>
</dbReference>
<dbReference type="GO" id="GO:0005246">
    <property type="term" value="F:calcium channel regulator activity"/>
    <property type="evidence" value="ECO:0007669"/>
    <property type="project" value="UniProtKB-KW"/>
</dbReference>
<dbReference type="GO" id="GO:0090729">
    <property type="term" value="F:toxin activity"/>
    <property type="evidence" value="ECO:0007669"/>
    <property type="project" value="UniProtKB-KW"/>
</dbReference>
<dbReference type="CDD" id="cd05383">
    <property type="entry name" value="CAP_CRISP"/>
    <property type="match status" value="1"/>
</dbReference>
<dbReference type="FunFam" id="1.10.10.740:FF:000001">
    <property type="entry name" value="Cysteine-rich secretory protein 2"/>
    <property type="match status" value="1"/>
</dbReference>
<dbReference type="FunFam" id="3.40.33.10:FF:000005">
    <property type="entry name" value="Cysteine-rich secretory protein 2"/>
    <property type="match status" value="1"/>
</dbReference>
<dbReference type="Gene3D" id="3.40.33.10">
    <property type="entry name" value="CAP"/>
    <property type="match status" value="1"/>
</dbReference>
<dbReference type="Gene3D" id="1.10.10.740">
    <property type="entry name" value="Crisp domain"/>
    <property type="match status" value="1"/>
</dbReference>
<dbReference type="InterPro" id="IPR018244">
    <property type="entry name" value="Allrgn_V5/Tpx1_CS"/>
</dbReference>
<dbReference type="InterPro" id="IPR014044">
    <property type="entry name" value="CAP_dom"/>
</dbReference>
<dbReference type="InterPro" id="IPR035940">
    <property type="entry name" value="CAP_sf"/>
</dbReference>
<dbReference type="InterPro" id="IPR042076">
    <property type="entry name" value="Crisp-like_dom"/>
</dbReference>
<dbReference type="InterPro" id="IPR001283">
    <property type="entry name" value="CRISP-related"/>
</dbReference>
<dbReference type="InterPro" id="IPR013871">
    <property type="entry name" value="Cysteine_rich_secretory"/>
</dbReference>
<dbReference type="InterPro" id="IPR034117">
    <property type="entry name" value="SCP_CRISP"/>
</dbReference>
<dbReference type="InterPro" id="IPR003582">
    <property type="entry name" value="ShKT_dom"/>
</dbReference>
<dbReference type="PANTHER" id="PTHR10334">
    <property type="entry name" value="CYSTEINE-RICH SECRETORY PROTEIN-RELATED"/>
    <property type="match status" value="1"/>
</dbReference>
<dbReference type="Pfam" id="PF00188">
    <property type="entry name" value="CAP"/>
    <property type="match status" value="1"/>
</dbReference>
<dbReference type="Pfam" id="PF08562">
    <property type="entry name" value="Crisp"/>
    <property type="match status" value="1"/>
</dbReference>
<dbReference type="PRINTS" id="PR00837">
    <property type="entry name" value="V5TPXLIKE"/>
</dbReference>
<dbReference type="SMART" id="SM00198">
    <property type="entry name" value="SCP"/>
    <property type="match status" value="1"/>
</dbReference>
<dbReference type="SUPFAM" id="SSF57546">
    <property type="entry name" value="Crisp domain-like"/>
    <property type="match status" value="1"/>
</dbReference>
<dbReference type="SUPFAM" id="SSF55797">
    <property type="entry name" value="PR-1-like"/>
    <property type="match status" value="1"/>
</dbReference>
<dbReference type="PROSITE" id="PS01009">
    <property type="entry name" value="CRISP_1"/>
    <property type="match status" value="1"/>
</dbReference>
<dbReference type="PROSITE" id="PS01010">
    <property type="entry name" value="CRISP_2"/>
    <property type="match status" value="1"/>
</dbReference>
<dbReference type="PROSITE" id="PS51670">
    <property type="entry name" value="SHKT"/>
    <property type="match status" value="1"/>
</dbReference>
<evidence type="ECO:0000250" key="1"/>
<evidence type="ECO:0000255" key="2">
    <source>
        <dbReference type="PROSITE-ProRule" id="PRU01005"/>
    </source>
</evidence>
<evidence type="ECO:0000305" key="3"/>
<proteinExistence type="evidence at transcript level"/>
<feature type="signal peptide" evidence="1">
    <location>
        <begin position="1"/>
        <end position="18"/>
    </location>
</feature>
<feature type="chain" id="PRO_0000380643" description="Cysteine-rich venom protein ENH1">
    <location>
        <begin position="19"/>
        <end position="239"/>
    </location>
</feature>
<feature type="domain" description="SCP">
    <location>
        <begin position="37"/>
        <end position="165"/>
    </location>
</feature>
<feature type="domain" description="ShKT" evidence="2">
    <location>
        <begin position="201"/>
        <end position="234"/>
    </location>
</feature>
<feature type="disulfide bond" evidence="2">
    <location>
        <begin position="74"/>
        <end position="152"/>
    </location>
</feature>
<feature type="disulfide bond" evidence="2">
    <location>
        <begin position="91"/>
        <end position="166"/>
    </location>
</feature>
<feature type="disulfide bond" evidence="2">
    <location>
        <begin position="147"/>
        <end position="163"/>
    </location>
</feature>
<feature type="disulfide bond" evidence="2">
    <location>
        <begin position="185"/>
        <end position="192"/>
    </location>
</feature>
<feature type="disulfide bond" evidence="2">
    <location>
        <begin position="188"/>
        <end position="197"/>
    </location>
</feature>
<feature type="disulfide bond" evidence="2">
    <location>
        <begin position="210"/>
        <end position="228"/>
    </location>
</feature>
<feature type="disulfide bond" evidence="2">
    <location>
        <begin position="219"/>
        <end position="232"/>
    </location>
</feature>